<accession>P0AEA1</accession>
<accession>P52104</accession>
<feature type="signal peptide" evidence="2">
    <location>
        <begin position="1"/>
        <end position="19"/>
    </location>
</feature>
<feature type="chain" id="PRO_0000043388" description="Curli production assembly/transport component CsgF">
    <location>
        <begin position="20"/>
        <end position="138"/>
    </location>
</feature>
<dbReference type="EMBL" id="AE014073">
    <property type="protein sequence ID" value="AAP16539.1"/>
    <property type="molecule type" value="Genomic_DNA"/>
</dbReference>
<dbReference type="RefSeq" id="WP_001264088.1">
    <property type="nucleotide sequence ID" value="NZ_WPGW01000114.1"/>
</dbReference>
<dbReference type="SMR" id="P0AEA1"/>
<dbReference type="GeneID" id="93776380"/>
<dbReference type="KEGG" id="sfx:S1105"/>
<dbReference type="PATRIC" id="fig|623.156.peg.954"/>
<dbReference type="HOGENOM" id="CLU_136740_0_0_6"/>
<dbReference type="Proteomes" id="UP000002673">
    <property type="component" value="Chromosome"/>
</dbReference>
<dbReference type="InterPro" id="IPR018893">
    <property type="entry name" value="T8SS_CsgF"/>
</dbReference>
<dbReference type="NCBIfam" id="NF007469">
    <property type="entry name" value="PRK10050.1"/>
    <property type="match status" value="1"/>
</dbReference>
<dbReference type="Pfam" id="PF10614">
    <property type="entry name" value="CsgF"/>
    <property type="match status" value="1"/>
</dbReference>
<protein>
    <recommendedName>
        <fullName>Curli production assembly/transport component CsgF</fullName>
    </recommendedName>
</protein>
<sequence>MRVKHAVVLLMLISPLSWAGTMTFQFRNPNFGGNPNNGAFLLNSAQAQNSYKDPSYNDDFGIETPSALDNFTQAIQSQILGGLLSNINTGKPGRMVTNDYIVDIANRDGQLQLNVTDRKTGQTSTIQVSGLQNNSTDF</sequence>
<gene>
    <name type="primary">csgF</name>
    <name type="ordered locus">S1105</name>
</gene>
<comment type="function">
    <text evidence="1">May be involved in the biogenesis of curli organelles.</text>
</comment>
<comment type="caution">
    <text evidence="3">This CDS is disrupted by an insertion sequence in strain 301.</text>
</comment>
<evidence type="ECO:0000250" key="1"/>
<evidence type="ECO:0000255" key="2"/>
<evidence type="ECO:0000305" key="3"/>
<name>CSGF_SHIFL</name>
<proteinExistence type="inferred from homology"/>
<keyword id="KW-0732">Signal</keyword>
<reference key="1">
    <citation type="journal article" date="2003" name="Infect. Immun.">
        <title>Complete genome sequence and comparative genomics of Shigella flexneri serotype 2a strain 2457T.</title>
        <authorList>
            <person name="Wei J."/>
            <person name="Goldberg M.B."/>
            <person name="Burland V."/>
            <person name="Venkatesan M.M."/>
            <person name="Deng W."/>
            <person name="Fournier G."/>
            <person name="Mayhew G.F."/>
            <person name="Plunkett G. III"/>
            <person name="Rose D.J."/>
            <person name="Darling A."/>
            <person name="Mau B."/>
            <person name="Perna N.T."/>
            <person name="Payne S.M."/>
            <person name="Runyen-Janecky L.J."/>
            <person name="Zhou S."/>
            <person name="Schwartz D.C."/>
            <person name="Blattner F.R."/>
        </authorList>
    </citation>
    <scope>NUCLEOTIDE SEQUENCE [LARGE SCALE GENOMIC DNA]</scope>
    <source>
        <strain>ATCC 700930 / 2457T / Serotype 2a</strain>
    </source>
</reference>
<organism>
    <name type="scientific">Shigella flexneri</name>
    <dbReference type="NCBI Taxonomy" id="623"/>
    <lineage>
        <taxon>Bacteria</taxon>
        <taxon>Pseudomonadati</taxon>
        <taxon>Pseudomonadota</taxon>
        <taxon>Gammaproteobacteria</taxon>
        <taxon>Enterobacterales</taxon>
        <taxon>Enterobacteriaceae</taxon>
        <taxon>Shigella</taxon>
    </lineage>
</organism>